<comment type="function">
    <text evidence="1">Cell division protein that is part of the divisome complex and is recruited early to the Z-ring. Probably stimulates Z-ring formation, perhaps through the cross-linking of FtsZ protofilaments. Its function overlaps with FtsA.</text>
</comment>
<comment type="subunit">
    <text evidence="1">Homodimer. Interacts with FtsZ.</text>
</comment>
<comment type="subcellular location">
    <subcellularLocation>
        <location evidence="1">Cytoplasm</location>
    </subcellularLocation>
    <text evidence="1">Localizes to the division site, in a FtsZ-dependent manner.</text>
</comment>
<comment type="similarity">
    <text evidence="1">Belongs to the SepF family.</text>
</comment>
<evidence type="ECO:0000255" key="1">
    <source>
        <dbReference type="HAMAP-Rule" id="MF_01197"/>
    </source>
</evidence>
<evidence type="ECO:0000256" key="2">
    <source>
        <dbReference type="SAM" id="MobiDB-lite"/>
    </source>
</evidence>
<protein>
    <recommendedName>
        <fullName evidence="1">Cell division protein SepF</fullName>
    </recommendedName>
</protein>
<sequence>MSHLALKDLFSGFFVIDDEEEVEVPDKQQQVNEAPAKEQSQQTTKQNAIKSVPQKSASRYTTTSEERNNRMSNYSKNNSRNVVTMNNATPNNASQESSKMCLFEPRVFSDTQDIADELKNRRATLVNLQRIDKVSAKRIIDFLSGTVYAIGGDIQRVGTDIFLCTPDNVEVAGSITDHIENMEHSFD</sequence>
<keyword id="KW-0131">Cell cycle</keyword>
<keyword id="KW-0132">Cell division</keyword>
<keyword id="KW-0963">Cytoplasm</keyword>
<keyword id="KW-0717">Septation</keyword>
<proteinExistence type="evidence at protein level"/>
<organism>
    <name type="scientific">Staphylococcus aureus (strain N315)</name>
    <dbReference type="NCBI Taxonomy" id="158879"/>
    <lineage>
        <taxon>Bacteria</taxon>
        <taxon>Bacillati</taxon>
        <taxon>Bacillota</taxon>
        <taxon>Bacilli</taxon>
        <taxon>Bacillales</taxon>
        <taxon>Staphylococcaceae</taxon>
        <taxon>Staphylococcus</taxon>
    </lineage>
</organism>
<name>SEPF_STAAN</name>
<accession>Q7A615</accession>
<gene>
    <name evidence="1" type="primary">sepF</name>
    <name type="ordered locus">SA1032</name>
</gene>
<feature type="chain" id="PRO_0000334083" description="Cell division protein SepF">
    <location>
        <begin position="1"/>
        <end position="187"/>
    </location>
</feature>
<feature type="region of interest" description="Disordered" evidence="2">
    <location>
        <begin position="21"/>
        <end position="97"/>
    </location>
</feature>
<feature type="compositionally biased region" description="Polar residues" evidence="2">
    <location>
        <begin position="38"/>
        <end position="63"/>
    </location>
</feature>
<feature type="compositionally biased region" description="Polar residues" evidence="2">
    <location>
        <begin position="70"/>
        <end position="97"/>
    </location>
</feature>
<dbReference type="EMBL" id="BA000018">
    <property type="protein sequence ID" value="BAB42284.1"/>
    <property type="molecule type" value="Genomic_DNA"/>
</dbReference>
<dbReference type="PIR" id="H89890">
    <property type="entry name" value="H89890"/>
</dbReference>
<dbReference type="RefSeq" id="WP_000018608.1">
    <property type="nucleotide sequence ID" value="NC_002745.2"/>
</dbReference>
<dbReference type="SMR" id="Q7A615"/>
<dbReference type="EnsemblBacteria" id="BAB42284">
    <property type="protein sequence ID" value="BAB42284"/>
    <property type="gene ID" value="BAB42284"/>
</dbReference>
<dbReference type="KEGG" id="sau:SA1032"/>
<dbReference type="HOGENOM" id="CLU_078499_4_1_9"/>
<dbReference type="GO" id="GO:0005737">
    <property type="term" value="C:cytoplasm"/>
    <property type="evidence" value="ECO:0007669"/>
    <property type="project" value="UniProtKB-SubCell"/>
</dbReference>
<dbReference type="GO" id="GO:0000917">
    <property type="term" value="P:division septum assembly"/>
    <property type="evidence" value="ECO:0007669"/>
    <property type="project" value="UniProtKB-KW"/>
</dbReference>
<dbReference type="GO" id="GO:0043093">
    <property type="term" value="P:FtsZ-dependent cytokinesis"/>
    <property type="evidence" value="ECO:0007669"/>
    <property type="project" value="UniProtKB-UniRule"/>
</dbReference>
<dbReference type="Gene3D" id="3.30.110.150">
    <property type="entry name" value="SepF-like protein"/>
    <property type="match status" value="1"/>
</dbReference>
<dbReference type="HAMAP" id="MF_01197">
    <property type="entry name" value="SepF"/>
    <property type="match status" value="1"/>
</dbReference>
<dbReference type="InterPro" id="IPR023052">
    <property type="entry name" value="Cell_div_SepF"/>
</dbReference>
<dbReference type="InterPro" id="IPR007561">
    <property type="entry name" value="Cell_div_SepF/SepF-rel"/>
</dbReference>
<dbReference type="InterPro" id="IPR038594">
    <property type="entry name" value="SepF-like_sf"/>
</dbReference>
<dbReference type="PANTHER" id="PTHR35798">
    <property type="entry name" value="CELL DIVISION PROTEIN SEPF"/>
    <property type="match status" value="1"/>
</dbReference>
<dbReference type="PANTHER" id="PTHR35798:SF1">
    <property type="entry name" value="CELL DIVISION PROTEIN SEPF"/>
    <property type="match status" value="1"/>
</dbReference>
<dbReference type="Pfam" id="PF04472">
    <property type="entry name" value="SepF"/>
    <property type="match status" value="1"/>
</dbReference>
<reference key="1">
    <citation type="journal article" date="2001" name="Lancet">
        <title>Whole genome sequencing of meticillin-resistant Staphylococcus aureus.</title>
        <authorList>
            <person name="Kuroda M."/>
            <person name="Ohta T."/>
            <person name="Uchiyama I."/>
            <person name="Baba T."/>
            <person name="Yuzawa H."/>
            <person name="Kobayashi I."/>
            <person name="Cui L."/>
            <person name="Oguchi A."/>
            <person name="Aoki K."/>
            <person name="Nagai Y."/>
            <person name="Lian J.-Q."/>
            <person name="Ito T."/>
            <person name="Kanamori M."/>
            <person name="Matsumaru H."/>
            <person name="Maruyama A."/>
            <person name="Murakami H."/>
            <person name="Hosoyama A."/>
            <person name="Mizutani-Ui Y."/>
            <person name="Takahashi N.K."/>
            <person name="Sawano T."/>
            <person name="Inoue R."/>
            <person name="Kaito C."/>
            <person name="Sekimizu K."/>
            <person name="Hirakawa H."/>
            <person name="Kuhara S."/>
            <person name="Goto S."/>
            <person name="Yabuzaki J."/>
            <person name="Kanehisa M."/>
            <person name="Yamashita A."/>
            <person name="Oshima K."/>
            <person name="Furuya K."/>
            <person name="Yoshino C."/>
            <person name="Shiba T."/>
            <person name="Hattori M."/>
            <person name="Ogasawara N."/>
            <person name="Hayashi H."/>
            <person name="Hiramatsu K."/>
        </authorList>
    </citation>
    <scope>NUCLEOTIDE SEQUENCE [LARGE SCALE GENOMIC DNA]</scope>
    <source>
        <strain>N315</strain>
    </source>
</reference>
<reference key="2">
    <citation type="submission" date="2007-10" db="UniProtKB">
        <title>Shotgun proteomic analysis of total and membrane protein extracts of S. aureus strain N315.</title>
        <authorList>
            <person name="Vaezzadeh A.R."/>
            <person name="Deshusses J."/>
            <person name="Lescuyer P."/>
            <person name="Hochstrasser D.F."/>
        </authorList>
    </citation>
    <scope>IDENTIFICATION BY MASS SPECTROMETRY [LARGE SCALE ANALYSIS]</scope>
    <source>
        <strain>N315</strain>
    </source>
</reference>